<sequence>MTYKRVLLKLSGEALMGEKPYGIDPAIVQSIAEDVSKVVENNVQLAIVVGGGNIFRGLKGSADGMDRATADYVGMLATVMNAISLQDGLERVGVATRVQTAIEMQEIAEPYIRRRAMRHLEKGRVVVFGGGCGNPFFTTDTTAALRAAEINAEVVMKATKVDGVYDRDPNQFKEAKKYSSLSYQQVLSDEIAVMDSTAIALCKDNNIPIMVFDIFKKGNISRAVAGEPIGSLIS</sequence>
<feature type="chain" id="PRO_0000323917" description="Uridylate kinase">
    <location>
        <begin position="1"/>
        <end position="234"/>
    </location>
</feature>
<feature type="binding site" evidence="1">
    <location>
        <begin position="9"/>
        <end position="12"/>
    </location>
    <ligand>
        <name>ATP</name>
        <dbReference type="ChEBI" id="CHEBI:30616"/>
    </ligand>
</feature>
<feature type="binding site" evidence="1">
    <location>
        <position position="51"/>
    </location>
    <ligand>
        <name>UMP</name>
        <dbReference type="ChEBI" id="CHEBI:57865"/>
    </ligand>
</feature>
<feature type="binding site" evidence="1">
    <location>
        <position position="52"/>
    </location>
    <ligand>
        <name>ATP</name>
        <dbReference type="ChEBI" id="CHEBI:30616"/>
    </ligand>
</feature>
<feature type="binding site" evidence="1">
    <location>
        <position position="56"/>
    </location>
    <ligand>
        <name>ATP</name>
        <dbReference type="ChEBI" id="CHEBI:30616"/>
    </ligand>
</feature>
<feature type="binding site" evidence="1">
    <location>
        <position position="71"/>
    </location>
    <ligand>
        <name>UMP</name>
        <dbReference type="ChEBI" id="CHEBI:57865"/>
    </ligand>
</feature>
<feature type="binding site" evidence="1">
    <location>
        <begin position="132"/>
        <end position="139"/>
    </location>
    <ligand>
        <name>UMP</name>
        <dbReference type="ChEBI" id="CHEBI:57865"/>
    </ligand>
</feature>
<feature type="binding site" evidence="1">
    <location>
        <position position="159"/>
    </location>
    <ligand>
        <name>ATP</name>
        <dbReference type="ChEBI" id="CHEBI:30616"/>
    </ligand>
</feature>
<feature type="binding site" evidence="1">
    <location>
        <position position="165"/>
    </location>
    <ligand>
        <name>ATP</name>
        <dbReference type="ChEBI" id="CHEBI:30616"/>
    </ligand>
</feature>
<feature type="binding site" evidence="1">
    <location>
        <position position="168"/>
    </location>
    <ligand>
        <name>ATP</name>
        <dbReference type="ChEBI" id="CHEBI:30616"/>
    </ligand>
</feature>
<gene>
    <name evidence="1" type="primary">pyrH</name>
    <name type="ordered locus">A9601_05781</name>
</gene>
<name>PYRH_PROMS</name>
<evidence type="ECO:0000255" key="1">
    <source>
        <dbReference type="HAMAP-Rule" id="MF_01220"/>
    </source>
</evidence>
<dbReference type="EC" id="2.7.4.22" evidence="1"/>
<dbReference type="EMBL" id="CP000551">
    <property type="protein sequence ID" value="ABM69864.1"/>
    <property type="molecule type" value="Genomic_DNA"/>
</dbReference>
<dbReference type="RefSeq" id="WP_011818030.1">
    <property type="nucleotide sequence ID" value="NC_008816.1"/>
</dbReference>
<dbReference type="SMR" id="A2BQ03"/>
<dbReference type="STRING" id="146891.A9601_05781"/>
<dbReference type="KEGG" id="pmb:A9601_05781"/>
<dbReference type="eggNOG" id="COG0528">
    <property type="taxonomic scope" value="Bacteria"/>
</dbReference>
<dbReference type="HOGENOM" id="CLU_033861_0_0_3"/>
<dbReference type="OrthoDB" id="9807458at2"/>
<dbReference type="UniPathway" id="UPA00159">
    <property type="reaction ID" value="UER00275"/>
</dbReference>
<dbReference type="Proteomes" id="UP000002590">
    <property type="component" value="Chromosome"/>
</dbReference>
<dbReference type="GO" id="GO:0005737">
    <property type="term" value="C:cytoplasm"/>
    <property type="evidence" value="ECO:0007669"/>
    <property type="project" value="UniProtKB-SubCell"/>
</dbReference>
<dbReference type="GO" id="GO:0005524">
    <property type="term" value="F:ATP binding"/>
    <property type="evidence" value="ECO:0007669"/>
    <property type="project" value="UniProtKB-KW"/>
</dbReference>
<dbReference type="GO" id="GO:0033862">
    <property type="term" value="F:UMP kinase activity"/>
    <property type="evidence" value="ECO:0007669"/>
    <property type="project" value="UniProtKB-EC"/>
</dbReference>
<dbReference type="GO" id="GO:0044210">
    <property type="term" value="P:'de novo' CTP biosynthetic process"/>
    <property type="evidence" value="ECO:0007669"/>
    <property type="project" value="UniProtKB-UniRule"/>
</dbReference>
<dbReference type="GO" id="GO:0006225">
    <property type="term" value="P:UDP biosynthetic process"/>
    <property type="evidence" value="ECO:0007669"/>
    <property type="project" value="TreeGrafter"/>
</dbReference>
<dbReference type="CDD" id="cd04254">
    <property type="entry name" value="AAK_UMPK-PyrH-Ec"/>
    <property type="match status" value="1"/>
</dbReference>
<dbReference type="FunFam" id="3.40.1160.10:FF:000001">
    <property type="entry name" value="Uridylate kinase"/>
    <property type="match status" value="1"/>
</dbReference>
<dbReference type="Gene3D" id="3.40.1160.10">
    <property type="entry name" value="Acetylglutamate kinase-like"/>
    <property type="match status" value="1"/>
</dbReference>
<dbReference type="HAMAP" id="MF_01220_B">
    <property type="entry name" value="PyrH_B"/>
    <property type="match status" value="1"/>
</dbReference>
<dbReference type="InterPro" id="IPR036393">
    <property type="entry name" value="AceGlu_kinase-like_sf"/>
</dbReference>
<dbReference type="InterPro" id="IPR001048">
    <property type="entry name" value="Asp/Glu/Uridylate_kinase"/>
</dbReference>
<dbReference type="InterPro" id="IPR011817">
    <property type="entry name" value="Uridylate_kinase"/>
</dbReference>
<dbReference type="InterPro" id="IPR015963">
    <property type="entry name" value="Uridylate_kinase_bac"/>
</dbReference>
<dbReference type="NCBIfam" id="TIGR02075">
    <property type="entry name" value="pyrH_bact"/>
    <property type="match status" value="1"/>
</dbReference>
<dbReference type="PANTHER" id="PTHR42833">
    <property type="entry name" value="URIDYLATE KINASE"/>
    <property type="match status" value="1"/>
</dbReference>
<dbReference type="PANTHER" id="PTHR42833:SF4">
    <property type="entry name" value="URIDYLATE KINASE PUMPKIN, CHLOROPLASTIC"/>
    <property type="match status" value="1"/>
</dbReference>
<dbReference type="Pfam" id="PF00696">
    <property type="entry name" value="AA_kinase"/>
    <property type="match status" value="1"/>
</dbReference>
<dbReference type="PIRSF" id="PIRSF005650">
    <property type="entry name" value="Uridylate_kin"/>
    <property type="match status" value="1"/>
</dbReference>
<dbReference type="SUPFAM" id="SSF53633">
    <property type="entry name" value="Carbamate kinase-like"/>
    <property type="match status" value="1"/>
</dbReference>
<protein>
    <recommendedName>
        <fullName evidence="1">Uridylate kinase</fullName>
        <shortName evidence="1">UK</shortName>
        <ecNumber evidence="1">2.7.4.22</ecNumber>
    </recommendedName>
    <alternativeName>
        <fullName evidence="1">Uridine monophosphate kinase</fullName>
        <shortName evidence="1">UMP kinase</shortName>
        <shortName evidence="1">UMPK</shortName>
    </alternativeName>
</protein>
<reference key="1">
    <citation type="journal article" date="2007" name="PLoS Genet.">
        <title>Patterns and implications of gene gain and loss in the evolution of Prochlorococcus.</title>
        <authorList>
            <person name="Kettler G.C."/>
            <person name="Martiny A.C."/>
            <person name="Huang K."/>
            <person name="Zucker J."/>
            <person name="Coleman M.L."/>
            <person name="Rodrigue S."/>
            <person name="Chen F."/>
            <person name="Lapidus A."/>
            <person name="Ferriera S."/>
            <person name="Johnson J."/>
            <person name="Steglich C."/>
            <person name="Church G.M."/>
            <person name="Richardson P."/>
            <person name="Chisholm S.W."/>
        </authorList>
    </citation>
    <scope>NUCLEOTIDE SEQUENCE [LARGE SCALE GENOMIC DNA]</scope>
    <source>
        <strain>AS9601</strain>
    </source>
</reference>
<comment type="function">
    <text evidence="1">Catalyzes the reversible phosphorylation of UMP to UDP.</text>
</comment>
<comment type="catalytic activity">
    <reaction evidence="1">
        <text>UMP + ATP = UDP + ADP</text>
        <dbReference type="Rhea" id="RHEA:24400"/>
        <dbReference type="ChEBI" id="CHEBI:30616"/>
        <dbReference type="ChEBI" id="CHEBI:57865"/>
        <dbReference type="ChEBI" id="CHEBI:58223"/>
        <dbReference type="ChEBI" id="CHEBI:456216"/>
        <dbReference type="EC" id="2.7.4.22"/>
    </reaction>
</comment>
<comment type="activity regulation">
    <text evidence="1">Inhibited by UTP.</text>
</comment>
<comment type="pathway">
    <text evidence="1">Pyrimidine metabolism; CTP biosynthesis via de novo pathway; UDP from UMP (UMPK route): step 1/1.</text>
</comment>
<comment type="subunit">
    <text evidence="1">Homohexamer.</text>
</comment>
<comment type="subcellular location">
    <subcellularLocation>
        <location evidence="1">Cytoplasm</location>
    </subcellularLocation>
</comment>
<comment type="similarity">
    <text evidence="1">Belongs to the UMP kinase family.</text>
</comment>
<proteinExistence type="inferred from homology"/>
<organism>
    <name type="scientific">Prochlorococcus marinus (strain AS9601)</name>
    <dbReference type="NCBI Taxonomy" id="146891"/>
    <lineage>
        <taxon>Bacteria</taxon>
        <taxon>Bacillati</taxon>
        <taxon>Cyanobacteriota</taxon>
        <taxon>Cyanophyceae</taxon>
        <taxon>Synechococcales</taxon>
        <taxon>Prochlorococcaceae</taxon>
        <taxon>Prochlorococcus</taxon>
    </lineage>
</organism>
<accession>A2BQ03</accession>
<keyword id="KW-0067">ATP-binding</keyword>
<keyword id="KW-0963">Cytoplasm</keyword>
<keyword id="KW-0418">Kinase</keyword>
<keyword id="KW-0547">Nucleotide-binding</keyword>
<keyword id="KW-0665">Pyrimidine biosynthesis</keyword>
<keyword id="KW-0808">Transferase</keyword>